<organism>
    <name type="scientific">Citrifermentans bemidjiense (strain ATCC BAA-1014 / DSM 16622 / JCM 12645 / Bem)</name>
    <name type="common">Geobacter bemidjiensis</name>
    <dbReference type="NCBI Taxonomy" id="404380"/>
    <lineage>
        <taxon>Bacteria</taxon>
        <taxon>Pseudomonadati</taxon>
        <taxon>Thermodesulfobacteriota</taxon>
        <taxon>Desulfuromonadia</taxon>
        <taxon>Geobacterales</taxon>
        <taxon>Geobacteraceae</taxon>
        <taxon>Citrifermentans</taxon>
    </lineage>
</organism>
<proteinExistence type="inferred from homology"/>
<accession>B5E957</accession>
<reference key="1">
    <citation type="submission" date="2008-07" db="EMBL/GenBank/DDBJ databases">
        <title>Complete sequence of Geobacter bemidjiensis BEM.</title>
        <authorList>
            <consortium name="US DOE Joint Genome Institute"/>
            <person name="Lucas S."/>
            <person name="Copeland A."/>
            <person name="Lapidus A."/>
            <person name="Glavina del Rio T."/>
            <person name="Dalin E."/>
            <person name="Tice H."/>
            <person name="Bruce D."/>
            <person name="Goodwin L."/>
            <person name="Pitluck S."/>
            <person name="Kiss H."/>
            <person name="Brettin T."/>
            <person name="Detter J.C."/>
            <person name="Han C."/>
            <person name="Kuske C.R."/>
            <person name="Schmutz J."/>
            <person name="Larimer F."/>
            <person name="Land M."/>
            <person name="Hauser L."/>
            <person name="Kyrpides N."/>
            <person name="Lykidis A."/>
            <person name="Lovley D."/>
            <person name="Richardson P."/>
        </authorList>
    </citation>
    <scope>NUCLEOTIDE SEQUENCE [LARGE SCALE GENOMIC DNA]</scope>
    <source>
        <strain>ATCC BAA-1014 / DSM 16622 / JCM 12645 / Bem</strain>
    </source>
</reference>
<name>RL27_CITBB</name>
<protein>
    <recommendedName>
        <fullName evidence="1">Large ribosomal subunit protein bL27</fullName>
    </recommendedName>
    <alternativeName>
        <fullName evidence="3">50S ribosomal protein L27</fullName>
    </alternativeName>
</protein>
<comment type="similarity">
    <text evidence="1">Belongs to the bacterial ribosomal protein bL27 family.</text>
</comment>
<evidence type="ECO:0000255" key="1">
    <source>
        <dbReference type="HAMAP-Rule" id="MF_00539"/>
    </source>
</evidence>
<evidence type="ECO:0000256" key="2">
    <source>
        <dbReference type="SAM" id="MobiDB-lite"/>
    </source>
</evidence>
<evidence type="ECO:0000305" key="3"/>
<keyword id="KW-1185">Reference proteome</keyword>
<keyword id="KW-0687">Ribonucleoprotein</keyword>
<keyword id="KW-0689">Ribosomal protein</keyword>
<gene>
    <name evidence="1" type="primary">rpmA</name>
    <name type="ordered locus">Gbem_0163</name>
</gene>
<dbReference type="EMBL" id="CP001124">
    <property type="protein sequence ID" value="ACH37194.1"/>
    <property type="molecule type" value="Genomic_DNA"/>
</dbReference>
<dbReference type="RefSeq" id="WP_012528602.1">
    <property type="nucleotide sequence ID" value="NC_011146.1"/>
</dbReference>
<dbReference type="SMR" id="B5E957"/>
<dbReference type="STRING" id="404380.Gbem_0163"/>
<dbReference type="KEGG" id="gbm:Gbem_0163"/>
<dbReference type="eggNOG" id="COG0211">
    <property type="taxonomic scope" value="Bacteria"/>
</dbReference>
<dbReference type="HOGENOM" id="CLU_095424_4_0_7"/>
<dbReference type="OrthoDB" id="9803474at2"/>
<dbReference type="Proteomes" id="UP000008825">
    <property type="component" value="Chromosome"/>
</dbReference>
<dbReference type="GO" id="GO:0022625">
    <property type="term" value="C:cytosolic large ribosomal subunit"/>
    <property type="evidence" value="ECO:0007669"/>
    <property type="project" value="TreeGrafter"/>
</dbReference>
<dbReference type="GO" id="GO:0003735">
    <property type="term" value="F:structural constituent of ribosome"/>
    <property type="evidence" value="ECO:0007669"/>
    <property type="project" value="InterPro"/>
</dbReference>
<dbReference type="GO" id="GO:0006412">
    <property type="term" value="P:translation"/>
    <property type="evidence" value="ECO:0007669"/>
    <property type="project" value="UniProtKB-UniRule"/>
</dbReference>
<dbReference type="FunFam" id="2.40.50.100:FF:000004">
    <property type="entry name" value="50S ribosomal protein L27"/>
    <property type="match status" value="1"/>
</dbReference>
<dbReference type="Gene3D" id="2.40.50.100">
    <property type="match status" value="1"/>
</dbReference>
<dbReference type="HAMAP" id="MF_00539">
    <property type="entry name" value="Ribosomal_bL27"/>
    <property type="match status" value="1"/>
</dbReference>
<dbReference type="InterPro" id="IPR001684">
    <property type="entry name" value="Ribosomal_bL27"/>
</dbReference>
<dbReference type="NCBIfam" id="TIGR00062">
    <property type="entry name" value="L27"/>
    <property type="match status" value="1"/>
</dbReference>
<dbReference type="PANTHER" id="PTHR15893:SF0">
    <property type="entry name" value="LARGE RIBOSOMAL SUBUNIT PROTEIN BL27M"/>
    <property type="match status" value="1"/>
</dbReference>
<dbReference type="PANTHER" id="PTHR15893">
    <property type="entry name" value="RIBOSOMAL PROTEIN L27"/>
    <property type="match status" value="1"/>
</dbReference>
<dbReference type="Pfam" id="PF01016">
    <property type="entry name" value="Ribosomal_L27"/>
    <property type="match status" value="1"/>
</dbReference>
<dbReference type="PRINTS" id="PR00063">
    <property type="entry name" value="RIBOSOMALL27"/>
</dbReference>
<dbReference type="SUPFAM" id="SSF110324">
    <property type="entry name" value="Ribosomal L27 protein-like"/>
    <property type="match status" value="1"/>
</dbReference>
<sequence>MAHKKGVGSSRNGRDSDGQRLGCKKFGGEAVKAGNIIYRQHGTKIHPGNNVGLGKDYTLFALIEGVVKFERMGKDRKKVSVYPAN</sequence>
<feature type="chain" id="PRO_1000128754" description="Large ribosomal subunit protein bL27">
    <location>
        <begin position="1"/>
        <end position="85"/>
    </location>
</feature>
<feature type="region of interest" description="Disordered" evidence="2">
    <location>
        <begin position="1"/>
        <end position="21"/>
    </location>
</feature>